<organism>
    <name type="scientific">Lactobacillus johnsonii (strain CNCM I-12250 / La1 / NCC 533)</name>
    <dbReference type="NCBI Taxonomy" id="257314"/>
    <lineage>
        <taxon>Bacteria</taxon>
        <taxon>Bacillati</taxon>
        <taxon>Bacillota</taxon>
        <taxon>Bacilli</taxon>
        <taxon>Lactobacillales</taxon>
        <taxon>Lactobacillaceae</taxon>
        <taxon>Lactobacillus</taxon>
    </lineage>
</organism>
<dbReference type="EMBL" id="AE017198">
    <property type="protein sequence ID" value="AAS08328.1"/>
    <property type="molecule type" value="Genomic_DNA"/>
</dbReference>
<dbReference type="RefSeq" id="WP_004895870.1">
    <property type="nucleotide sequence ID" value="NC_005362.1"/>
</dbReference>
<dbReference type="SMR" id="Q74L86"/>
<dbReference type="GeneID" id="83569757"/>
<dbReference type="KEGG" id="ljo:LJ_0342"/>
<dbReference type="eggNOG" id="COG0090">
    <property type="taxonomic scope" value="Bacteria"/>
</dbReference>
<dbReference type="HOGENOM" id="CLU_036235_2_1_9"/>
<dbReference type="Proteomes" id="UP000000581">
    <property type="component" value="Chromosome"/>
</dbReference>
<dbReference type="GO" id="GO:0015934">
    <property type="term" value="C:large ribosomal subunit"/>
    <property type="evidence" value="ECO:0007669"/>
    <property type="project" value="InterPro"/>
</dbReference>
<dbReference type="GO" id="GO:0019843">
    <property type="term" value="F:rRNA binding"/>
    <property type="evidence" value="ECO:0007669"/>
    <property type="project" value="UniProtKB-UniRule"/>
</dbReference>
<dbReference type="GO" id="GO:0003735">
    <property type="term" value="F:structural constituent of ribosome"/>
    <property type="evidence" value="ECO:0007669"/>
    <property type="project" value="InterPro"/>
</dbReference>
<dbReference type="GO" id="GO:0016740">
    <property type="term" value="F:transferase activity"/>
    <property type="evidence" value="ECO:0007669"/>
    <property type="project" value="InterPro"/>
</dbReference>
<dbReference type="GO" id="GO:0002181">
    <property type="term" value="P:cytoplasmic translation"/>
    <property type="evidence" value="ECO:0007669"/>
    <property type="project" value="TreeGrafter"/>
</dbReference>
<dbReference type="FunFam" id="2.30.30.30:FF:000001">
    <property type="entry name" value="50S ribosomal protein L2"/>
    <property type="match status" value="1"/>
</dbReference>
<dbReference type="FunFam" id="2.40.50.140:FF:000003">
    <property type="entry name" value="50S ribosomal protein L2"/>
    <property type="match status" value="1"/>
</dbReference>
<dbReference type="FunFam" id="4.10.950.10:FF:000001">
    <property type="entry name" value="50S ribosomal protein L2"/>
    <property type="match status" value="1"/>
</dbReference>
<dbReference type="Gene3D" id="2.30.30.30">
    <property type="match status" value="1"/>
</dbReference>
<dbReference type="Gene3D" id="2.40.50.140">
    <property type="entry name" value="Nucleic acid-binding proteins"/>
    <property type="match status" value="1"/>
</dbReference>
<dbReference type="Gene3D" id="4.10.950.10">
    <property type="entry name" value="Ribosomal protein L2, domain 3"/>
    <property type="match status" value="1"/>
</dbReference>
<dbReference type="HAMAP" id="MF_01320_B">
    <property type="entry name" value="Ribosomal_uL2_B"/>
    <property type="match status" value="1"/>
</dbReference>
<dbReference type="InterPro" id="IPR012340">
    <property type="entry name" value="NA-bd_OB-fold"/>
</dbReference>
<dbReference type="InterPro" id="IPR014722">
    <property type="entry name" value="Rib_uL2_dom2"/>
</dbReference>
<dbReference type="InterPro" id="IPR002171">
    <property type="entry name" value="Ribosomal_uL2"/>
</dbReference>
<dbReference type="InterPro" id="IPR005880">
    <property type="entry name" value="Ribosomal_uL2_bac/org-type"/>
</dbReference>
<dbReference type="InterPro" id="IPR022669">
    <property type="entry name" value="Ribosomal_uL2_C"/>
</dbReference>
<dbReference type="InterPro" id="IPR022671">
    <property type="entry name" value="Ribosomal_uL2_CS"/>
</dbReference>
<dbReference type="InterPro" id="IPR014726">
    <property type="entry name" value="Ribosomal_uL2_dom3"/>
</dbReference>
<dbReference type="InterPro" id="IPR022666">
    <property type="entry name" value="Ribosomal_uL2_RNA-bd_dom"/>
</dbReference>
<dbReference type="InterPro" id="IPR008991">
    <property type="entry name" value="Translation_prot_SH3-like_sf"/>
</dbReference>
<dbReference type="NCBIfam" id="TIGR01171">
    <property type="entry name" value="rplB_bact"/>
    <property type="match status" value="1"/>
</dbReference>
<dbReference type="PANTHER" id="PTHR13691:SF5">
    <property type="entry name" value="LARGE RIBOSOMAL SUBUNIT PROTEIN UL2M"/>
    <property type="match status" value="1"/>
</dbReference>
<dbReference type="PANTHER" id="PTHR13691">
    <property type="entry name" value="RIBOSOMAL PROTEIN L2"/>
    <property type="match status" value="1"/>
</dbReference>
<dbReference type="Pfam" id="PF00181">
    <property type="entry name" value="Ribosomal_L2"/>
    <property type="match status" value="1"/>
</dbReference>
<dbReference type="Pfam" id="PF03947">
    <property type="entry name" value="Ribosomal_L2_C"/>
    <property type="match status" value="1"/>
</dbReference>
<dbReference type="PIRSF" id="PIRSF002158">
    <property type="entry name" value="Ribosomal_L2"/>
    <property type="match status" value="1"/>
</dbReference>
<dbReference type="SMART" id="SM01383">
    <property type="entry name" value="Ribosomal_L2"/>
    <property type="match status" value="1"/>
</dbReference>
<dbReference type="SMART" id="SM01382">
    <property type="entry name" value="Ribosomal_L2_C"/>
    <property type="match status" value="1"/>
</dbReference>
<dbReference type="SUPFAM" id="SSF50249">
    <property type="entry name" value="Nucleic acid-binding proteins"/>
    <property type="match status" value="1"/>
</dbReference>
<dbReference type="SUPFAM" id="SSF50104">
    <property type="entry name" value="Translation proteins SH3-like domain"/>
    <property type="match status" value="1"/>
</dbReference>
<dbReference type="PROSITE" id="PS00467">
    <property type="entry name" value="RIBOSOMAL_L2"/>
    <property type="match status" value="1"/>
</dbReference>
<gene>
    <name evidence="1" type="primary">rplB</name>
    <name type="ordered locus">LJ_0342</name>
</gene>
<evidence type="ECO:0000255" key="1">
    <source>
        <dbReference type="HAMAP-Rule" id="MF_01320"/>
    </source>
</evidence>
<evidence type="ECO:0000256" key="2">
    <source>
        <dbReference type="SAM" id="MobiDB-lite"/>
    </source>
</evidence>
<evidence type="ECO:0000305" key="3"/>
<name>RL2_LACJO</name>
<comment type="function">
    <text evidence="1">One of the primary rRNA binding proteins. Required for association of the 30S and 50S subunits to form the 70S ribosome, for tRNA binding and peptide bond formation. It has been suggested to have peptidyltransferase activity; this is somewhat controversial. Makes several contacts with the 16S rRNA in the 70S ribosome.</text>
</comment>
<comment type="subunit">
    <text evidence="1">Part of the 50S ribosomal subunit. Forms a bridge to the 30S subunit in the 70S ribosome.</text>
</comment>
<comment type="similarity">
    <text evidence="1">Belongs to the universal ribosomal protein uL2 family.</text>
</comment>
<sequence length="278" mass="30260">MAIIKYKPTTNGRRNMTSSDFAEITKKKPEKTLLESQSHTAGRNSYGHITVRHRGGGHKQKYRIIDFKRNKDDVKAVVKAIEYDPNRTANIALLHYTDGIKAYILAPKGLKVGAVVESGPDADIKPGNALPLSAIPAGTEIHNIELKPGKGGQLVRSAGTVAQVLGNDGKYTLVRLQSGEVRKILSTCRATIGSVGNEQHSLIQLGKAGRSRWLGKRPQSRGSVMNPNDHPHGGGEGKAPVGRPQPMTPWGKKSRGIKTRNSKARSEKLIIRHRKGNK</sequence>
<keyword id="KW-0687">Ribonucleoprotein</keyword>
<keyword id="KW-0689">Ribosomal protein</keyword>
<keyword id="KW-0694">RNA-binding</keyword>
<keyword id="KW-0699">rRNA-binding</keyword>
<protein>
    <recommendedName>
        <fullName evidence="1">Large ribosomal subunit protein uL2</fullName>
    </recommendedName>
    <alternativeName>
        <fullName evidence="3">50S ribosomal protein L2</fullName>
    </alternativeName>
</protein>
<proteinExistence type="inferred from homology"/>
<accession>Q74L86</accession>
<feature type="chain" id="PRO_0000237196" description="Large ribosomal subunit protein uL2">
    <location>
        <begin position="1"/>
        <end position="278"/>
    </location>
</feature>
<feature type="region of interest" description="Disordered" evidence="2">
    <location>
        <begin position="210"/>
        <end position="278"/>
    </location>
</feature>
<feature type="compositionally biased region" description="Basic residues" evidence="2">
    <location>
        <begin position="210"/>
        <end position="219"/>
    </location>
</feature>
<feature type="compositionally biased region" description="Basic residues" evidence="2">
    <location>
        <begin position="252"/>
        <end position="263"/>
    </location>
</feature>
<reference key="1">
    <citation type="journal article" date="2004" name="Proc. Natl. Acad. Sci. U.S.A.">
        <title>The genome sequence of the probiotic intestinal bacterium Lactobacillus johnsonii NCC 533.</title>
        <authorList>
            <person name="Pridmore R.D."/>
            <person name="Berger B."/>
            <person name="Desiere F."/>
            <person name="Vilanova D."/>
            <person name="Barretto C."/>
            <person name="Pittet A.-C."/>
            <person name="Zwahlen M.-C."/>
            <person name="Rouvet M."/>
            <person name="Altermann E."/>
            <person name="Barrangou R."/>
            <person name="Mollet B."/>
            <person name="Mercenier A."/>
            <person name="Klaenhammer T."/>
            <person name="Arigoni F."/>
            <person name="Schell M.A."/>
        </authorList>
    </citation>
    <scope>NUCLEOTIDE SEQUENCE [LARGE SCALE GENOMIC DNA]</scope>
    <source>
        <strain>CNCM I-1225 / La1 / NCC 533</strain>
    </source>
</reference>